<reference key="1">
    <citation type="journal article" date="1997" name="Dev. Genet.">
        <title>Precocious sporulation and developmental lethality in yelA null mutants of Dictyostelium.</title>
        <authorList>
            <person name="Osherov N."/>
            <person name="Wang N."/>
            <person name="Loomis W.F."/>
        </authorList>
    </citation>
    <scope>NUCLEOTIDE SEQUENCE [MRNA]</scope>
    <scope>FUNCTION</scope>
    <scope>DEVELOPMENTAL STAGE</scope>
    <scope>DISRUPTION PHENOTYPE</scope>
    <source>
        <strain>AX4</strain>
    </source>
</reference>
<reference key="2">
    <citation type="journal article" date="2005" name="Nature">
        <title>The genome of the social amoeba Dictyostelium discoideum.</title>
        <authorList>
            <person name="Eichinger L."/>
            <person name="Pachebat J.A."/>
            <person name="Gloeckner G."/>
            <person name="Rajandream M.A."/>
            <person name="Sucgang R."/>
            <person name="Berriman M."/>
            <person name="Song J."/>
            <person name="Olsen R."/>
            <person name="Szafranski K."/>
            <person name="Xu Q."/>
            <person name="Tunggal B."/>
            <person name="Kummerfeld S."/>
            <person name="Madera M."/>
            <person name="Konfortov B.A."/>
            <person name="Rivero F."/>
            <person name="Bankier A.T."/>
            <person name="Lehmann R."/>
            <person name="Hamlin N."/>
            <person name="Davies R."/>
            <person name="Gaudet P."/>
            <person name="Fey P."/>
            <person name="Pilcher K."/>
            <person name="Chen G."/>
            <person name="Saunders D."/>
            <person name="Sodergren E.J."/>
            <person name="Davis P."/>
            <person name="Kerhornou A."/>
            <person name="Nie X."/>
            <person name="Hall N."/>
            <person name="Anjard C."/>
            <person name="Hemphill L."/>
            <person name="Bason N."/>
            <person name="Farbrother P."/>
            <person name="Desany B."/>
            <person name="Just E."/>
            <person name="Morio T."/>
            <person name="Rost R."/>
            <person name="Churcher C.M."/>
            <person name="Cooper J."/>
            <person name="Haydock S."/>
            <person name="van Driessche N."/>
            <person name="Cronin A."/>
            <person name="Goodhead I."/>
            <person name="Muzny D.M."/>
            <person name="Mourier T."/>
            <person name="Pain A."/>
            <person name="Lu M."/>
            <person name="Harper D."/>
            <person name="Lindsay R."/>
            <person name="Hauser H."/>
            <person name="James K.D."/>
            <person name="Quiles M."/>
            <person name="Madan Babu M."/>
            <person name="Saito T."/>
            <person name="Buchrieser C."/>
            <person name="Wardroper A."/>
            <person name="Felder M."/>
            <person name="Thangavelu M."/>
            <person name="Johnson D."/>
            <person name="Knights A."/>
            <person name="Loulseged H."/>
            <person name="Mungall K.L."/>
            <person name="Oliver K."/>
            <person name="Price C."/>
            <person name="Quail M.A."/>
            <person name="Urushihara H."/>
            <person name="Hernandez J."/>
            <person name="Rabbinowitsch E."/>
            <person name="Steffen D."/>
            <person name="Sanders M."/>
            <person name="Ma J."/>
            <person name="Kohara Y."/>
            <person name="Sharp S."/>
            <person name="Simmonds M.N."/>
            <person name="Spiegler S."/>
            <person name="Tivey A."/>
            <person name="Sugano S."/>
            <person name="White B."/>
            <person name="Walker D."/>
            <person name="Woodward J.R."/>
            <person name="Winckler T."/>
            <person name="Tanaka Y."/>
            <person name="Shaulsky G."/>
            <person name="Schleicher M."/>
            <person name="Weinstock G.M."/>
            <person name="Rosenthal A."/>
            <person name="Cox E.C."/>
            <person name="Chisholm R.L."/>
            <person name="Gibbs R.A."/>
            <person name="Loomis W.F."/>
            <person name="Platzer M."/>
            <person name="Kay R.R."/>
            <person name="Williams J.G."/>
            <person name="Dear P.H."/>
            <person name="Noegel A.A."/>
            <person name="Barrell B.G."/>
            <person name="Kuspa A."/>
        </authorList>
    </citation>
    <scope>NUCLEOTIDE SEQUENCE [LARGE SCALE GENOMIC DNA]</scope>
    <source>
        <strain>AX4</strain>
    </source>
</reference>
<protein>
    <recommendedName>
        <fullName>Yellow mounds protein A</fullName>
        <shortName>YELA</shortName>
    </recommendedName>
</protein>
<comment type="function">
    <text evidence="3">Plays as essential role in regulating terminal differentiation.</text>
</comment>
<comment type="developmental stage">
    <text evidence="3">First accumulates at 8 hours of development and is maintained in both prespore and prestalk cells until culmination when it is found only is stalk cells. During the mound stage, equally abundant in all cells, whereas during the finger/migrating slug stage, expression is somewhat higher in the anterior prestalk region. During culmination predominantly seen in the descending stalk tube.</text>
</comment>
<comment type="disruption phenotype">
    <text evidence="3">Null cells are arrested at the tight mound stage but accumulate the bright yellow pigment characteristic of mature sori. Although these mutant strains do not form fruiting bodies, many of the cells encapsulate within the mounds. Sporulation occurs about 6 hours earlier, accompanied by precocious expression of a prespore gene, spiA. However, the spores are defective and lose viability over a period of several hours. Unencapsulated cells also die unless they are dissociated from the mounds and shaken in suspension.</text>
</comment>
<feature type="chain" id="PRO_0000377482" description="Yellow mounds protein A">
    <location>
        <begin position="1"/>
        <end position="909"/>
    </location>
</feature>
<feature type="domain" description="MIF4G">
    <location>
        <begin position="7"/>
        <end position="283"/>
    </location>
</feature>
<feature type="region of interest" description="Disordered" evidence="2">
    <location>
        <begin position="178"/>
        <end position="232"/>
    </location>
</feature>
<feature type="region of interest" description="Disordered" evidence="2">
    <location>
        <begin position="415"/>
        <end position="439"/>
    </location>
</feature>
<feature type="region of interest" description="Disordered" evidence="2">
    <location>
        <begin position="460"/>
        <end position="537"/>
    </location>
</feature>
<feature type="region of interest" description="Disordered" evidence="2">
    <location>
        <begin position="627"/>
        <end position="689"/>
    </location>
</feature>
<feature type="region of interest" description="Disordered" evidence="2">
    <location>
        <begin position="704"/>
        <end position="774"/>
    </location>
</feature>
<feature type="coiled-coil region" evidence="1">
    <location>
        <begin position="845"/>
        <end position="877"/>
    </location>
</feature>
<feature type="compositionally biased region" description="Acidic residues" evidence="2">
    <location>
        <begin position="204"/>
        <end position="215"/>
    </location>
</feature>
<feature type="compositionally biased region" description="Low complexity" evidence="2">
    <location>
        <begin position="216"/>
        <end position="231"/>
    </location>
</feature>
<feature type="compositionally biased region" description="Low complexity" evidence="2">
    <location>
        <begin position="417"/>
        <end position="436"/>
    </location>
</feature>
<feature type="compositionally biased region" description="Polar residues" evidence="2">
    <location>
        <begin position="473"/>
        <end position="490"/>
    </location>
</feature>
<feature type="compositionally biased region" description="Low complexity" evidence="2">
    <location>
        <begin position="491"/>
        <end position="525"/>
    </location>
</feature>
<feature type="compositionally biased region" description="Polar residues" evidence="2">
    <location>
        <begin position="721"/>
        <end position="738"/>
    </location>
</feature>
<feature type="compositionally biased region" description="Low complexity" evidence="2">
    <location>
        <begin position="739"/>
        <end position="756"/>
    </location>
</feature>
<accession>Q23925</accession>
<accession>Q54VV2</accession>
<organism>
    <name type="scientific">Dictyostelium discoideum</name>
    <name type="common">Social amoeba</name>
    <dbReference type="NCBI Taxonomy" id="44689"/>
    <lineage>
        <taxon>Eukaryota</taxon>
        <taxon>Amoebozoa</taxon>
        <taxon>Evosea</taxon>
        <taxon>Eumycetozoa</taxon>
        <taxon>Dictyostelia</taxon>
        <taxon>Dictyosteliales</taxon>
        <taxon>Dictyosteliaceae</taxon>
        <taxon>Dictyostelium</taxon>
    </lineage>
</organism>
<gene>
    <name type="primary">yelA</name>
    <name type="synonym">DG1014</name>
    <name type="ORF">DDB_G0280047</name>
</gene>
<dbReference type="EMBL" id="U63062">
    <property type="protein sequence ID" value="AAB04027.1"/>
    <property type="molecule type" value="mRNA"/>
</dbReference>
<dbReference type="EMBL" id="AAFI02000035">
    <property type="protein sequence ID" value="EAL67250.1"/>
    <property type="molecule type" value="Genomic_DNA"/>
</dbReference>
<dbReference type="RefSeq" id="XP_641253.1">
    <property type="nucleotide sequence ID" value="XM_636161.1"/>
</dbReference>
<dbReference type="FunCoup" id="Q23925">
    <property type="interactions" value="369"/>
</dbReference>
<dbReference type="STRING" id="44689.Q23925"/>
<dbReference type="PaxDb" id="44689-DDB0214918"/>
<dbReference type="EnsemblProtists" id="EAL67250">
    <property type="protein sequence ID" value="EAL67250"/>
    <property type="gene ID" value="DDB_G0280047"/>
</dbReference>
<dbReference type="GeneID" id="8622385"/>
<dbReference type="KEGG" id="ddi:DDB_G0280047"/>
<dbReference type="dictyBase" id="DDB_G0280047">
    <property type="gene designation" value="yelA"/>
</dbReference>
<dbReference type="VEuPathDB" id="AmoebaDB:DDB_G0280047"/>
<dbReference type="eggNOG" id="ENOG502RA65">
    <property type="taxonomic scope" value="Eukaryota"/>
</dbReference>
<dbReference type="HOGENOM" id="CLU_319695_0_0_1"/>
<dbReference type="InParanoid" id="Q23925"/>
<dbReference type="OMA" id="LVHNGLY"/>
<dbReference type="PRO" id="PR:Q23925"/>
<dbReference type="Proteomes" id="UP000002195">
    <property type="component" value="Chromosome 3"/>
</dbReference>
<dbReference type="GO" id="GO:0003723">
    <property type="term" value="F:RNA binding"/>
    <property type="evidence" value="ECO:0007669"/>
    <property type="project" value="InterPro"/>
</dbReference>
<dbReference type="GO" id="GO:0009653">
    <property type="term" value="P:anatomical structure morphogenesis"/>
    <property type="evidence" value="ECO:0000315"/>
    <property type="project" value="dictyBase"/>
</dbReference>
<dbReference type="GO" id="GO:1903014">
    <property type="term" value="P:cellular response to differentiation-inducing factor 1"/>
    <property type="evidence" value="ECO:0000315"/>
    <property type="project" value="dictyBase"/>
</dbReference>
<dbReference type="GO" id="GO:0006935">
    <property type="term" value="P:chemotaxis"/>
    <property type="evidence" value="ECO:0000315"/>
    <property type="project" value="dictyBase"/>
</dbReference>
<dbReference type="GO" id="GO:0031286">
    <property type="term" value="P:negative regulation of sorocarp stalk cell differentiation"/>
    <property type="evidence" value="ECO:0000315"/>
    <property type="project" value="dictyBase"/>
</dbReference>
<dbReference type="GO" id="GO:0030587">
    <property type="term" value="P:sorocarp development"/>
    <property type="evidence" value="ECO:0007001"/>
    <property type="project" value="dictyBase"/>
</dbReference>
<dbReference type="GO" id="GO:0030435">
    <property type="term" value="P:sporulation resulting in formation of a cellular spore"/>
    <property type="evidence" value="ECO:0000315"/>
    <property type="project" value="dictyBase"/>
</dbReference>
<dbReference type="Gene3D" id="1.25.40.180">
    <property type="match status" value="1"/>
</dbReference>
<dbReference type="InterPro" id="IPR016024">
    <property type="entry name" value="ARM-type_fold"/>
</dbReference>
<dbReference type="InterPro" id="IPR003890">
    <property type="entry name" value="MIF4G-like_typ-3"/>
</dbReference>
<dbReference type="PANTHER" id="PTHR36911:SF3">
    <property type="entry name" value="GATA ZINC FINGER DOMAIN-CONTAINING PROTEIN 4-RELATED"/>
    <property type="match status" value="1"/>
</dbReference>
<dbReference type="PANTHER" id="PTHR36911">
    <property type="entry name" value="LIM ZINC-BINDING DOMAIN-CONTAINING PROTEIN-RELATED"/>
    <property type="match status" value="1"/>
</dbReference>
<dbReference type="Pfam" id="PF02854">
    <property type="entry name" value="MIF4G"/>
    <property type="match status" value="1"/>
</dbReference>
<dbReference type="SMART" id="SM00543">
    <property type="entry name" value="MIF4G"/>
    <property type="match status" value="1"/>
</dbReference>
<dbReference type="SUPFAM" id="SSF48371">
    <property type="entry name" value="ARM repeat"/>
    <property type="match status" value="1"/>
</dbReference>
<proteinExistence type="evidence at transcript level"/>
<keyword id="KW-0175">Coiled coil</keyword>
<keyword id="KW-1185">Reference proteome</keyword>
<evidence type="ECO:0000255" key="1"/>
<evidence type="ECO:0000256" key="2">
    <source>
        <dbReference type="SAM" id="MobiDB-lite"/>
    </source>
</evidence>
<evidence type="ECO:0000269" key="3">
    <source>
    </source>
</evidence>
<sequence>MSQSDPLNVVSRILNKISKDNFQVLIDQLVSKCQLLDKNESTLFINNIFEKVVEEPSSSSYYIQIINKIQPIFQQNFSIGVGNKLVENFNKRYQILTDQINSNEETFDFNSSKQSFLNLCKFMGECYYTLPSSFLVDVVNNHLPQVTKETADDMTLQQLMEIEIIATSFTSAGKTIESMGGFSSKHENNKTHNNNNNNNNHDHDDDDHDEEDNENNYENTTSTTNNINNNNIQSRENDLHFKGIQKALEDATSVLSFLIENRQLLPPRVRFMVKNLFELKNNKWIIPKAINDDLNAQREVVKVATNHGKTISKSLSEKCDDDSTLNTIFWKSFFQALGIQNYKILRQLMLDDKSNISPSSTSPTIPLSPFLRRSMNITSPSQFNLNNCNNNNNSININNNNMDIDASFDLNDGLMESSSNNNNSNSQLQFSLSSSSGIKDNHNVPTIDLNTISSNNNQQINLPSGFLSPKVARSNSPSLSSVVKQPQSQQNNNNNNNNNNNNTTITTTTSSNNNINNNNNNNNNNKIKESPELSSAPDSNLSVIVSIIDSKIWTPQKEIWKKKIMNKIIPMKSILKKPQKIEILAAIWQNMCDNNYEYGSYLDLCLNLIKMDEGDISPLYSLDGGNVPPVKPYQQSAQPPPPPPSSSSSSAQQPPNEPVNPLLNKLKGPNRRSSMATLQMKPSGISEARRSSISVPFELNRRGSLSGDIPSYCPPAPKLKSTPTLKSTPAIVQNGGSITSTSSSSSSSSSSSSSTTKNIHPTSESKKQPIAKKHKPDLDSFKDVLISSLQDDFALKMFVKKRSLTTYMELLKDLYREFIIEIPLLLKCISLVHNGLYELTDEECTMLFDLEEMAQEQQNLEKQNDQQQNLLTQNNQIFQWKTNTWEEKPQTPPPPPTSYFDLGSDVFVL</sequence>
<name>YELA_DICDI</name>